<name>AN32E_RAT</name>
<accession>Q5XIE0</accession>
<keyword id="KW-0007">Acetylation</keyword>
<keyword id="KW-0143">Chaperone</keyword>
<keyword id="KW-0156">Chromatin regulator</keyword>
<keyword id="KW-0963">Cytoplasm</keyword>
<keyword id="KW-1017">Isopeptide bond</keyword>
<keyword id="KW-0433">Leucine-rich repeat</keyword>
<keyword id="KW-0539">Nucleus</keyword>
<keyword id="KW-0597">Phosphoprotein</keyword>
<keyword id="KW-1185">Reference proteome</keyword>
<keyword id="KW-0677">Repeat</keyword>
<keyword id="KW-0832">Ubl conjugation</keyword>
<organism>
    <name type="scientific">Rattus norvegicus</name>
    <name type="common">Rat</name>
    <dbReference type="NCBI Taxonomy" id="10116"/>
    <lineage>
        <taxon>Eukaryota</taxon>
        <taxon>Metazoa</taxon>
        <taxon>Chordata</taxon>
        <taxon>Craniata</taxon>
        <taxon>Vertebrata</taxon>
        <taxon>Euteleostomi</taxon>
        <taxon>Mammalia</taxon>
        <taxon>Eutheria</taxon>
        <taxon>Euarchontoglires</taxon>
        <taxon>Glires</taxon>
        <taxon>Rodentia</taxon>
        <taxon>Myomorpha</taxon>
        <taxon>Muroidea</taxon>
        <taxon>Muridae</taxon>
        <taxon>Murinae</taxon>
        <taxon>Rattus</taxon>
    </lineage>
</organism>
<proteinExistence type="evidence at transcript level"/>
<dbReference type="EMBL" id="BC083744">
    <property type="protein sequence ID" value="AAH83744.1"/>
    <property type="molecule type" value="mRNA"/>
</dbReference>
<dbReference type="RefSeq" id="NP_001013218.1">
    <property type="nucleotide sequence ID" value="NM_001013200.1"/>
</dbReference>
<dbReference type="SMR" id="Q5XIE0"/>
<dbReference type="BioGRID" id="263117">
    <property type="interactions" value="3"/>
</dbReference>
<dbReference type="FunCoup" id="Q5XIE0">
    <property type="interactions" value="3409"/>
</dbReference>
<dbReference type="STRING" id="10116.ENSRNOP00000028744"/>
<dbReference type="iPTMnet" id="Q5XIE0"/>
<dbReference type="PhosphoSitePlus" id="Q5XIE0"/>
<dbReference type="jPOST" id="Q5XIE0"/>
<dbReference type="PaxDb" id="10116-ENSRNOP00000028744"/>
<dbReference type="Ensembl" id="ENSRNOT00000028744.7">
    <property type="protein sequence ID" value="ENSRNOP00000028744.4"/>
    <property type="gene ID" value="ENSRNOG00000021168.8"/>
</dbReference>
<dbReference type="GeneID" id="361999"/>
<dbReference type="KEGG" id="rno:361999"/>
<dbReference type="UCSC" id="RGD:1310611">
    <property type="organism name" value="rat"/>
</dbReference>
<dbReference type="AGR" id="RGD:1310611"/>
<dbReference type="CTD" id="81611"/>
<dbReference type="RGD" id="1310611">
    <property type="gene designation" value="Anp32e"/>
</dbReference>
<dbReference type="eggNOG" id="KOG2739">
    <property type="taxonomic scope" value="Eukaryota"/>
</dbReference>
<dbReference type="GeneTree" id="ENSGT00950000182907"/>
<dbReference type="HOGENOM" id="CLU_063314_1_1_1"/>
<dbReference type="InParanoid" id="Q5XIE0"/>
<dbReference type="OrthoDB" id="82742at9989"/>
<dbReference type="PRO" id="PR:Q5XIE0"/>
<dbReference type="Proteomes" id="UP000002494">
    <property type="component" value="Chromosome 2"/>
</dbReference>
<dbReference type="Bgee" id="ENSRNOG00000021168">
    <property type="expression patterns" value="Expressed in thymus and 20 other cell types or tissues"/>
</dbReference>
<dbReference type="GO" id="GO:0005737">
    <property type="term" value="C:cytoplasm"/>
    <property type="evidence" value="ECO:0000266"/>
    <property type="project" value="RGD"/>
</dbReference>
<dbReference type="GO" id="GO:0031410">
    <property type="term" value="C:cytoplasmic vesicle"/>
    <property type="evidence" value="ECO:0000266"/>
    <property type="project" value="RGD"/>
</dbReference>
<dbReference type="GO" id="GO:0098978">
    <property type="term" value="C:glutamatergic synapse"/>
    <property type="evidence" value="ECO:0000266"/>
    <property type="project" value="RGD"/>
</dbReference>
<dbReference type="GO" id="GO:0005634">
    <property type="term" value="C:nucleus"/>
    <property type="evidence" value="ECO:0000266"/>
    <property type="project" value="RGD"/>
</dbReference>
<dbReference type="GO" id="GO:0098839">
    <property type="term" value="C:postsynaptic density membrane"/>
    <property type="evidence" value="ECO:0000266"/>
    <property type="project" value="RGD"/>
</dbReference>
<dbReference type="GO" id="GO:0098895">
    <property type="term" value="C:postsynaptic endosome membrane"/>
    <property type="evidence" value="ECO:0000266"/>
    <property type="project" value="RGD"/>
</dbReference>
<dbReference type="GO" id="GO:0000812">
    <property type="term" value="C:Swr1 complex"/>
    <property type="evidence" value="ECO:0000250"/>
    <property type="project" value="UniProtKB"/>
</dbReference>
<dbReference type="GO" id="GO:0030672">
    <property type="term" value="C:synaptic vesicle membrane"/>
    <property type="evidence" value="ECO:0000266"/>
    <property type="project" value="RGD"/>
</dbReference>
<dbReference type="GO" id="GO:0042393">
    <property type="term" value="F:histone binding"/>
    <property type="evidence" value="ECO:0000250"/>
    <property type="project" value="UniProtKB"/>
</dbReference>
<dbReference type="GO" id="GO:0140713">
    <property type="term" value="F:histone chaperone activity"/>
    <property type="evidence" value="ECO:0000250"/>
    <property type="project" value="UniProtKB"/>
</dbReference>
<dbReference type="GO" id="GO:0019212">
    <property type="term" value="F:phosphatase inhibitor activity"/>
    <property type="evidence" value="ECO:0000266"/>
    <property type="project" value="RGD"/>
</dbReference>
<dbReference type="GO" id="GO:0044183">
    <property type="term" value="F:protein folding chaperone"/>
    <property type="evidence" value="ECO:0000266"/>
    <property type="project" value="RGD"/>
</dbReference>
<dbReference type="GO" id="GO:0006325">
    <property type="term" value="P:chromatin organization"/>
    <property type="evidence" value="ECO:0007669"/>
    <property type="project" value="UniProtKB-KW"/>
</dbReference>
<dbReference type="GO" id="GO:0042981">
    <property type="term" value="P:regulation of apoptotic process"/>
    <property type="evidence" value="ECO:0000318"/>
    <property type="project" value="GO_Central"/>
</dbReference>
<dbReference type="FunFam" id="3.80.10.10:FF:000003">
    <property type="entry name" value="Acidic leucine-rich nuclear phosphoprotein 32 family member A"/>
    <property type="match status" value="1"/>
</dbReference>
<dbReference type="Gene3D" id="3.80.10.10">
    <property type="entry name" value="Ribonuclease Inhibitor"/>
    <property type="match status" value="1"/>
</dbReference>
<dbReference type="InterPro" id="IPR045081">
    <property type="entry name" value="AN32"/>
</dbReference>
<dbReference type="InterPro" id="IPR001611">
    <property type="entry name" value="Leu-rich_rpt"/>
</dbReference>
<dbReference type="InterPro" id="IPR032675">
    <property type="entry name" value="LRR_dom_sf"/>
</dbReference>
<dbReference type="PANTHER" id="PTHR11375">
    <property type="entry name" value="ACIDIC LEUCINE-RICH NUCLEAR PHOSPHOPROTEIN 32"/>
    <property type="match status" value="1"/>
</dbReference>
<dbReference type="PANTHER" id="PTHR11375:SF5">
    <property type="entry name" value="ACIDIC LEUCINE-RICH NUCLEAR PHOSPHOPROTEIN 32 FAMILY MEMBER E"/>
    <property type="match status" value="1"/>
</dbReference>
<dbReference type="Pfam" id="PF14580">
    <property type="entry name" value="LRR_9"/>
    <property type="match status" value="1"/>
</dbReference>
<dbReference type="SUPFAM" id="SSF52058">
    <property type="entry name" value="L domain-like"/>
    <property type="match status" value="1"/>
</dbReference>
<dbReference type="PROSITE" id="PS51450">
    <property type="entry name" value="LRR"/>
    <property type="match status" value="4"/>
</dbReference>
<reference key="1">
    <citation type="journal article" date="2004" name="Genome Res.">
        <title>The status, quality, and expansion of the NIH full-length cDNA project: the Mammalian Gene Collection (MGC).</title>
        <authorList>
            <consortium name="The MGC Project Team"/>
        </authorList>
    </citation>
    <scope>NUCLEOTIDE SEQUENCE [LARGE SCALE MRNA]</scope>
    <source>
        <tissue>Heart</tissue>
    </source>
</reference>
<reference key="2">
    <citation type="journal article" date="2005" name="Cerebellum">
        <title>The Anp32 family of proteins containing leucine-rich repeats.</title>
        <authorList>
            <person name="Matilla A."/>
            <person name="Radrizzani M."/>
        </authorList>
    </citation>
    <scope>GENE FAMILY</scope>
    <scope>NOMENCLATURE</scope>
</reference>
<comment type="function">
    <text evidence="1">Histone chaperone that specifically mediates the genome-wide removal of histone H2A.Z/H2AZ1 from the nucleosome: removes H2A.Z/H2AZ1 from its normal sites of deposition, especially from enhancer and insulator regions. Not involved in deposition of H2A.Z/H2AZ1 in the nucleosome. May stabilize the evicted H2A.Z/H2AZ1-H2B dimer, thus shifting the equilibrium towards dissociation and the off-chromatin state. Inhibits activity of protein phosphatase 2A (PP2A). Does not inhibit protein phosphatase 1. May play a role in cerebellar development and synaptogenesis (By similarity).</text>
</comment>
<comment type="subunit">
    <text evidence="1">Component of a SWR1-like complex, composed of EP400, KAT5/TIP60, TRRAP, BRD8, RUVBL1, RUVBL2, ING3 and ANP32E; the complex does not contain SRCAP. Interacts with H2A.Z/H2AZ1. Interacts with the importin alpha KPNA1 and KPNA2 (By similarity).</text>
</comment>
<comment type="subcellular location">
    <subcellularLocation>
        <location evidence="1">Cytoplasm</location>
    </subcellularLocation>
    <subcellularLocation>
        <location evidence="1">Nucleus</location>
    </subcellularLocation>
</comment>
<comment type="domain">
    <text evidence="1">The H2A.Z-interacting domain (ZID) mediates a direct interaction with H2A.Z/H2AZ1.</text>
</comment>
<comment type="PTM">
    <text evidence="1">Phosphorylated. The phosphorylation is nuclear localization signal (NLS)-dependent (By similarity).</text>
</comment>
<comment type="similarity">
    <text evidence="4">Belongs to the ANP32 family.</text>
</comment>
<protein>
    <recommendedName>
        <fullName>Acidic leucine-rich nuclear phosphoprotein 32 family member E</fullName>
    </recommendedName>
</protein>
<feature type="chain" id="PRO_0000236251" description="Acidic leucine-rich nuclear phosphoprotein 32 family member E">
    <location>
        <begin position="1"/>
        <end position="258"/>
    </location>
</feature>
<feature type="repeat" description="LRR 1">
    <location>
        <begin position="18"/>
        <end position="38"/>
    </location>
</feature>
<feature type="repeat" description="LRR 2">
    <location>
        <begin position="43"/>
        <end position="64"/>
    </location>
</feature>
<feature type="repeat" description="LRR 3">
    <location>
        <begin position="65"/>
        <end position="87"/>
    </location>
</feature>
<feature type="repeat" description="LRR 4">
    <location>
        <begin position="89"/>
        <end position="110"/>
    </location>
</feature>
<feature type="domain" description="LRRCT">
    <location>
        <begin position="123"/>
        <end position="161"/>
    </location>
</feature>
<feature type="region of interest" description="Disordered" evidence="3">
    <location>
        <begin position="149"/>
        <end position="258"/>
    </location>
</feature>
<feature type="region of interest" description="ZID domain" evidence="1">
    <location>
        <begin position="205"/>
        <end position="258"/>
    </location>
</feature>
<feature type="compositionally biased region" description="Acidic residues" evidence="3">
    <location>
        <begin position="149"/>
        <end position="206"/>
    </location>
</feature>
<feature type="compositionally biased region" description="Acidic residues" evidence="3">
    <location>
        <begin position="216"/>
        <end position="238"/>
    </location>
</feature>
<feature type="compositionally biased region" description="Basic and acidic residues" evidence="3">
    <location>
        <begin position="239"/>
        <end position="249"/>
    </location>
</feature>
<feature type="modified residue" description="N-acetylmethionine" evidence="2">
    <location>
        <position position="1"/>
    </location>
</feature>
<feature type="cross-link" description="Glycyl lysine isopeptide (Lys-Gly) (interchain with G-Cter in SUMO2)" evidence="2">
    <location>
        <position position="68"/>
    </location>
</feature>
<gene>
    <name type="primary">Anp32e</name>
</gene>
<evidence type="ECO:0000250" key="1"/>
<evidence type="ECO:0000250" key="2">
    <source>
        <dbReference type="UniProtKB" id="Q9BTT0"/>
    </source>
</evidence>
<evidence type="ECO:0000256" key="3">
    <source>
        <dbReference type="SAM" id="MobiDB-lite"/>
    </source>
</evidence>
<evidence type="ECO:0000305" key="4"/>
<sequence length="258" mass="29418">MEMKKKINMELKNRAPEEVTELVLDNCLCVNGEIEGLNDTFKELEFLSMANVELSSLARLPSLNKLRKLELSDNIISGGLEVLAEKCPNLTYLNLSGNKIKDLSTVEALQNLKNLKSLDLFNCEITNLEDYRESIFELLQQITYLDGFDQEDNEAPDSEEEEEDEDGDEDEEDEEEDEAGPPEGYEDEDEDEDEAGSEVGEGEEEVGLSYLMKEEIQDEEDDDDYVDEGEEEEEEEEEGPRGEKRKRDAEDDGEEDDD</sequence>